<name>RFPLA_RAT</name>
<protein>
    <recommendedName>
        <fullName>Ret finger protein-like 4A</fullName>
    </recommendedName>
</protein>
<organism>
    <name type="scientific">Rattus norvegicus</name>
    <name type="common">Rat</name>
    <dbReference type="NCBI Taxonomy" id="10116"/>
    <lineage>
        <taxon>Eukaryota</taxon>
        <taxon>Metazoa</taxon>
        <taxon>Chordata</taxon>
        <taxon>Craniata</taxon>
        <taxon>Vertebrata</taxon>
        <taxon>Euteleostomi</taxon>
        <taxon>Mammalia</taxon>
        <taxon>Eutheria</taxon>
        <taxon>Euarchontoglires</taxon>
        <taxon>Glires</taxon>
        <taxon>Rodentia</taxon>
        <taxon>Myomorpha</taxon>
        <taxon>Muroidea</taxon>
        <taxon>Muridae</taxon>
        <taxon>Murinae</taxon>
        <taxon>Rattus</taxon>
    </lineage>
</organism>
<reference key="1">
    <citation type="submission" date="2005-07" db="EMBL/GenBank/DDBJ databases">
        <authorList>
            <person name="Mural R.J."/>
            <person name="Adams M.D."/>
            <person name="Myers E.W."/>
            <person name="Smith H.O."/>
            <person name="Venter J.C."/>
        </authorList>
    </citation>
    <scope>NUCLEOTIDE SEQUENCE [LARGE SCALE GENOMIC DNA]</scope>
</reference>
<comment type="subunit">
    <text evidence="1">Interacts with PSMB1, UBE2A and CCNB1.</text>
</comment>
<comment type="subcellular location">
    <subcellularLocation>
        <location evidence="1">Cytoplasm</location>
    </subcellularLocation>
    <subcellularLocation>
        <location evidence="1">Nucleus</location>
    </subcellularLocation>
</comment>
<sequence length="285" mass="32483">MAHFFKENSSCYFCFRYLENPVYLNCGYICCFQCLDSLEKSPEGDGVLCPNCSVVSLKEDIRHAKQLRNLVTTVKDLEPQLNFILTMDPSMKIFQVNMILDVDTAQNNLIISEDLRSVYHTSQTQDRKKCAERFDPSPCVLGSSRFTSGCHYWEVVVGTSKEWDIGICKESINRQEVVYLSEKKGFWTVGVRNEEVYAASTDPLTVLLVNPRLHRVGIFLDLLEKSVSFWDLGDGSHIYTFLEIPDTEPFRPFFSPANTYPDEEQVISICPVMNPSIFGLPVNPV</sequence>
<gene>
    <name type="primary">Rfpl4a</name>
    <name type="synonym">Rfpl4</name>
</gene>
<dbReference type="EMBL" id="CH474075">
    <property type="protein sequence ID" value="EDL75888.1"/>
    <property type="molecule type" value="Genomic_DNA"/>
</dbReference>
<dbReference type="EMBL" id="CH474075">
    <property type="protein sequence ID" value="EDL75889.1"/>
    <property type="molecule type" value="Genomic_DNA"/>
</dbReference>
<dbReference type="RefSeq" id="NP_001099692.1">
    <property type="nucleotide sequence ID" value="NM_001106222.1"/>
</dbReference>
<dbReference type="SMR" id="D4ABM4"/>
<dbReference type="FunCoup" id="D4ABM4">
    <property type="interactions" value="7"/>
</dbReference>
<dbReference type="STRING" id="10116.ENSRNOP00000021077"/>
<dbReference type="PhosphoSitePlus" id="D4ABM4"/>
<dbReference type="PaxDb" id="10116-ENSRNOP00000021077"/>
<dbReference type="Ensembl" id="ENSRNOT00000021077.5">
    <property type="protein sequence ID" value="ENSRNOP00000021077.4"/>
    <property type="gene ID" value="ENSRNOG00000015743.5"/>
</dbReference>
<dbReference type="GeneID" id="292583"/>
<dbReference type="KEGG" id="rno:292583"/>
<dbReference type="UCSC" id="RGD:1307409">
    <property type="organism name" value="rat"/>
</dbReference>
<dbReference type="AGR" id="RGD:1307409"/>
<dbReference type="CTD" id="342931"/>
<dbReference type="RGD" id="1307409">
    <property type="gene designation" value="Rfpl4a"/>
</dbReference>
<dbReference type="eggNOG" id="KOG2177">
    <property type="taxonomic scope" value="Eukaryota"/>
</dbReference>
<dbReference type="GeneTree" id="ENSGT00940000163187"/>
<dbReference type="HOGENOM" id="CLU_013137_7_1_1"/>
<dbReference type="InParanoid" id="D4ABM4"/>
<dbReference type="OMA" id="RCGYSKQ"/>
<dbReference type="OrthoDB" id="6105938at2759"/>
<dbReference type="PhylomeDB" id="D4ABM4"/>
<dbReference type="TreeFam" id="TF317532"/>
<dbReference type="PRO" id="PR:D4ABM4"/>
<dbReference type="Proteomes" id="UP000002494">
    <property type="component" value="Chromosome 1"/>
</dbReference>
<dbReference type="Proteomes" id="UP000234681">
    <property type="component" value="Chromosome 1"/>
</dbReference>
<dbReference type="Bgee" id="ENSRNOG00000015743">
    <property type="expression patterns" value="Expressed in ovary"/>
</dbReference>
<dbReference type="GO" id="GO:0005737">
    <property type="term" value="C:cytoplasm"/>
    <property type="evidence" value="ECO:0000266"/>
    <property type="project" value="RGD"/>
</dbReference>
<dbReference type="GO" id="GO:0001674">
    <property type="term" value="C:female germ cell nucleus"/>
    <property type="evidence" value="ECO:0000266"/>
    <property type="project" value="RGD"/>
</dbReference>
<dbReference type="GO" id="GO:0061630">
    <property type="term" value="F:ubiquitin protein ligase activity"/>
    <property type="evidence" value="ECO:0000318"/>
    <property type="project" value="GO_Central"/>
</dbReference>
<dbReference type="GO" id="GO:0008270">
    <property type="term" value="F:zinc ion binding"/>
    <property type="evidence" value="ECO:0007669"/>
    <property type="project" value="UniProtKB-KW"/>
</dbReference>
<dbReference type="GO" id="GO:0045087">
    <property type="term" value="P:innate immune response"/>
    <property type="evidence" value="ECO:0000318"/>
    <property type="project" value="GO_Central"/>
</dbReference>
<dbReference type="GO" id="GO:0010468">
    <property type="term" value="P:regulation of gene expression"/>
    <property type="evidence" value="ECO:0000318"/>
    <property type="project" value="GO_Central"/>
</dbReference>
<dbReference type="CDD" id="cd15821">
    <property type="entry name" value="SPRY_PRY_RFPL"/>
    <property type="match status" value="1"/>
</dbReference>
<dbReference type="CDD" id="cd16621">
    <property type="entry name" value="vRING-HC-C4C4_RFPL"/>
    <property type="match status" value="1"/>
</dbReference>
<dbReference type="FunFam" id="2.60.120.920:FF:000040">
    <property type="entry name" value="Ret finger protein-like 4A"/>
    <property type="match status" value="1"/>
</dbReference>
<dbReference type="Gene3D" id="2.60.120.920">
    <property type="match status" value="1"/>
</dbReference>
<dbReference type="Gene3D" id="3.30.40.10">
    <property type="entry name" value="Zinc/RING finger domain, C3HC4 (zinc finger)"/>
    <property type="match status" value="1"/>
</dbReference>
<dbReference type="InterPro" id="IPR001870">
    <property type="entry name" value="B30.2/SPRY"/>
</dbReference>
<dbReference type="InterPro" id="IPR043136">
    <property type="entry name" value="B30.2/SPRY_sf"/>
</dbReference>
<dbReference type="InterPro" id="IPR003879">
    <property type="entry name" value="Butyrophylin_SPRY"/>
</dbReference>
<dbReference type="InterPro" id="IPR013320">
    <property type="entry name" value="ConA-like_dom_sf"/>
</dbReference>
<dbReference type="InterPro" id="IPR006574">
    <property type="entry name" value="PRY"/>
</dbReference>
<dbReference type="InterPro" id="IPR022723">
    <property type="entry name" value="RDM_domain_RFPL"/>
</dbReference>
<dbReference type="InterPro" id="IPR037960">
    <property type="entry name" value="SPRY/PRY_RFPL"/>
</dbReference>
<dbReference type="InterPro" id="IPR003877">
    <property type="entry name" value="SPRY_dom"/>
</dbReference>
<dbReference type="InterPro" id="IPR050143">
    <property type="entry name" value="TRIM/RBCC"/>
</dbReference>
<dbReference type="InterPro" id="IPR001841">
    <property type="entry name" value="Znf_RING"/>
</dbReference>
<dbReference type="InterPro" id="IPR013083">
    <property type="entry name" value="Znf_RING/FYVE/PHD"/>
</dbReference>
<dbReference type="PANTHER" id="PTHR24103">
    <property type="entry name" value="E3 UBIQUITIN-PROTEIN LIGASE TRIM"/>
    <property type="match status" value="1"/>
</dbReference>
<dbReference type="Pfam" id="PF13765">
    <property type="entry name" value="PRY"/>
    <property type="match status" value="1"/>
</dbReference>
<dbReference type="Pfam" id="PF11002">
    <property type="entry name" value="RDM"/>
    <property type="match status" value="1"/>
</dbReference>
<dbReference type="Pfam" id="PF00622">
    <property type="entry name" value="SPRY"/>
    <property type="match status" value="1"/>
</dbReference>
<dbReference type="Pfam" id="PF15227">
    <property type="entry name" value="zf-C3HC4_4"/>
    <property type="match status" value="1"/>
</dbReference>
<dbReference type="PRINTS" id="PR01407">
    <property type="entry name" value="BUTYPHLNCDUF"/>
</dbReference>
<dbReference type="SMART" id="SM00589">
    <property type="entry name" value="PRY"/>
    <property type="match status" value="1"/>
</dbReference>
<dbReference type="SMART" id="SM00449">
    <property type="entry name" value="SPRY"/>
    <property type="match status" value="1"/>
</dbReference>
<dbReference type="SUPFAM" id="SSF49899">
    <property type="entry name" value="Concanavalin A-like lectins/glucanases"/>
    <property type="match status" value="1"/>
</dbReference>
<dbReference type="SUPFAM" id="SSF57850">
    <property type="entry name" value="RING/U-box"/>
    <property type="match status" value="1"/>
</dbReference>
<dbReference type="PROSITE" id="PS50188">
    <property type="entry name" value="B302_SPRY"/>
    <property type="match status" value="1"/>
</dbReference>
<dbReference type="PROSITE" id="PS50089">
    <property type="entry name" value="ZF_RING_2"/>
    <property type="match status" value="1"/>
</dbReference>
<evidence type="ECO:0000250" key="1">
    <source>
        <dbReference type="UniProtKB" id="Q8VH31"/>
    </source>
</evidence>
<evidence type="ECO:0000255" key="2">
    <source>
        <dbReference type="PROSITE-ProRule" id="PRU00175"/>
    </source>
</evidence>
<evidence type="ECO:0000255" key="3">
    <source>
        <dbReference type="PROSITE-ProRule" id="PRU00548"/>
    </source>
</evidence>
<feature type="chain" id="PRO_0000394968" description="Ret finger protein-like 4A">
    <location>
        <begin position="1"/>
        <end position="285"/>
    </location>
</feature>
<feature type="domain" description="B30.2/SPRY" evidence="3">
    <location>
        <begin position="78"/>
        <end position="276"/>
    </location>
</feature>
<feature type="zinc finger region" description="RING-type; degenerate" evidence="2">
    <location>
        <begin position="11"/>
        <end position="53"/>
    </location>
</feature>
<keyword id="KW-0963">Cytoplasm</keyword>
<keyword id="KW-0479">Metal-binding</keyword>
<keyword id="KW-0539">Nucleus</keyword>
<keyword id="KW-1185">Reference proteome</keyword>
<keyword id="KW-0862">Zinc</keyword>
<keyword id="KW-0863">Zinc-finger</keyword>
<accession>D4ABM4</accession>
<proteinExistence type="inferred from homology"/>